<sequence length="170" mass="18642">MDQSVPSENQPETGEGRTIIDIAGIMKMIPHRYPFLLVDRVIDIVRGERGIGIKNVTASESHFAGHFPNHPVMPGVLIIESMAQTAAVLVVDALGTDAEGRVVYFMSIEGAKFRRPVVPGDQLRIECERLQHRGNVWKFRGTARVDGQIVAEASFAAMILRPSPAQQAEA</sequence>
<reference key="1">
    <citation type="journal article" date="2007" name="J. Bacteriol.">
        <title>Genome sequence analysis of the emerging human pathogenic acetic acid bacterium Granulibacter bethesdensis.</title>
        <authorList>
            <person name="Greenberg D.E."/>
            <person name="Porcella S.F."/>
            <person name="Zelazny A.M."/>
            <person name="Virtaneva K."/>
            <person name="Sturdevant D.E."/>
            <person name="Kupko J.J. III"/>
            <person name="Barbian K.D."/>
            <person name="Babar A."/>
            <person name="Dorward D.W."/>
            <person name="Holland S.M."/>
        </authorList>
    </citation>
    <scope>NUCLEOTIDE SEQUENCE [LARGE SCALE GENOMIC DNA]</scope>
    <source>
        <strain>ATCC BAA-1260 / CGDNIH1</strain>
    </source>
</reference>
<evidence type="ECO:0000255" key="1">
    <source>
        <dbReference type="HAMAP-Rule" id="MF_00406"/>
    </source>
</evidence>
<accession>Q0BTL1</accession>
<gene>
    <name evidence="1" type="primary">fabZ</name>
    <name type="ordered locus">GbCGDNIH1_0943</name>
</gene>
<comment type="function">
    <text evidence="1">Involved in unsaturated fatty acids biosynthesis. Catalyzes the dehydration of short chain beta-hydroxyacyl-ACPs and long chain saturated and unsaturated beta-hydroxyacyl-ACPs.</text>
</comment>
<comment type="catalytic activity">
    <reaction evidence="1">
        <text>a (3R)-hydroxyacyl-[ACP] = a (2E)-enoyl-[ACP] + H2O</text>
        <dbReference type="Rhea" id="RHEA:13097"/>
        <dbReference type="Rhea" id="RHEA-COMP:9925"/>
        <dbReference type="Rhea" id="RHEA-COMP:9945"/>
        <dbReference type="ChEBI" id="CHEBI:15377"/>
        <dbReference type="ChEBI" id="CHEBI:78784"/>
        <dbReference type="ChEBI" id="CHEBI:78827"/>
        <dbReference type="EC" id="4.2.1.59"/>
    </reaction>
</comment>
<comment type="subcellular location">
    <subcellularLocation>
        <location evidence="1">Cytoplasm</location>
    </subcellularLocation>
</comment>
<comment type="similarity">
    <text evidence="1">Belongs to the thioester dehydratase family. FabZ subfamily.</text>
</comment>
<organism>
    <name type="scientific">Granulibacter bethesdensis (strain ATCC BAA-1260 / CGDNIH1)</name>
    <dbReference type="NCBI Taxonomy" id="391165"/>
    <lineage>
        <taxon>Bacteria</taxon>
        <taxon>Pseudomonadati</taxon>
        <taxon>Pseudomonadota</taxon>
        <taxon>Alphaproteobacteria</taxon>
        <taxon>Acetobacterales</taxon>
        <taxon>Acetobacteraceae</taxon>
        <taxon>Granulibacter</taxon>
    </lineage>
</organism>
<dbReference type="EC" id="4.2.1.59" evidence="1"/>
<dbReference type="EMBL" id="CP000394">
    <property type="protein sequence ID" value="ABI61841.1"/>
    <property type="molecule type" value="Genomic_DNA"/>
</dbReference>
<dbReference type="RefSeq" id="WP_011631650.1">
    <property type="nucleotide sequence ID" value="NC_008343.2"/>
</dbReference>
<dbReference type="SMR" id="Q0BTL1"/>
<dbReference type="STRING" id="391165.GbCGDNIH1_0943"/>
<dbReference type="GeneID" id="69745204"/>
<dbReference type="KEGG" id="gbe:GbCGDNIH1_0943"/>
<dbReference type="eggNOG" id="COG0764">
    <property type="taxonomic scope" value="Bacteria"/>
</dbReference>
<dbReference type="HOGENOM" id="CLU_078912_1_2_5"/>
<dbReference type="OrthoDB" id="9772788at2"/>
<dbReference type="Proteomes" id="UP000001963">
    <property type="component" value="Chromosome"/>
</dbReference>
<dbReference type="GO" id="GO:0005737">
    <property type="term" value="C:cytoplasm"/>
    <property type="evidence" value="ECO:0007669"/>
    <property type="project" value="UniProtKB-SubCell"/>
</dbReference>
<dbReference type="GO" id="GO:0016020">
    <property type="term" value="C:membrane"/>
    <property type="evidence" value="ECO:0007669"/>
    <property type="project" value="GOC"/>
</dbReference>
<dbReference type="GO" id="GO:0019171">
    <property type="term" value="F:(3R)-hydroxyacyl-[acyl-carrier-protein] dehydratase activity"/>
    <property type="evidence" value="ECO:0007669"/>
    <property type="project" value="UniProtKB-EC"/>
</dbReference>
<dbReference type="GO" id="GO:0006633">
    <property type="term" value="P:fatty acid biosynthetic process"/>
    <property type="evidence" value="ECO:0007669"/>
    <property type="project" value="UniProtKB-UniRule"/>
</dbReference>
<dbReference type="GO" id="GO:0009245">
    <property type="term" value="P:lipid A biosynthetic process"/>
    <property type="evidence" value="ECO:0007669"/>
    <property type="project" value="UniProtKB-UniRule"/>
</dbReference>
<dbReference type="CDD" id="cd01288">
    <property type="entry name" value="FabZ"/>
    <property type="match status" value="1"/>
</dbReference>
<dbReference type="FunFam" id="3.10.129.10:FF:000001">
    <property type="entry name" value="3-hydroxyacyl-[acyl-carrier-protein] dehydratase FabZ"/>
    <property type="match status" value="1"/>
</dbReference>
<dbReference type="Gene3D" id="3.10.129.10">
    <property type="entry name" value="Hotdog Thioesterase"/>
    <property type="match status" value="1"/>
</dbReference>
<dbReference type="HAMAP" id="MF_00406">
    <property type="entry name" value="FabZ"/>
    <property type="match status" value="1"/>
</dbReference>
<dbReference type="InterPro" id="IPR013114">
    <property type="entry name" value="FabA_FabZ"/>
</dbReference>
<dbReference type="InterPro" id="IPR010084">
    <property type="entry name" value="FabZ"/>
</dbReference>
<dbReference type="InterPro" id="IPR029069">
    <property type="entry name" value="HotDog_dom_sf"/>
</dbReference>
<dbReference type="NCBIfam" id="TIGR01750">
    <property type="entry name" value="fabZ"/>
    <property type="match status" value="1"/>
</dbReference>
<dbReference type="NCBIfam" id="NF000582">
    <property type="entry name" value="PRK00006.1"/>
    <property type="match status" value="1"/>
</dbReference>
<dbReference type="PANTHER" id="PTHR30272">
    <property type="entry name" value="3-HYDROXYACYL-[ACYL-CARRIER-PROTEIN] DEHYDRATASE"/>
    <property type="match status" value="1"/>
</dbReference>
<dbReference type="PANTHER" id="PTHR30272:SF1">
    <property type="entry name" value="3-HYDROXYACYL-[ACYL-CARRIER-PROTEIN] DEHYDRATASE"/>
    <property type="match status" value="1"/>
</dbReference>
<dbReference type="Pfam" id="PF07977">
    <property type="entry name" value="FabA"/>
    <property type="match status" value="1"/>
</dbReference>
<dbReference type="SUPFAM" id="SSF54637">
    <property type="entry name" value="Thioesterase/thiol ester dehydrase-isomerase"/>
    <property type="match status" value="1"/>
</dbReference>
<protein>
    <recommendedName>
        <fullName evidence="1">3-hydroxyacyl-[acyl-carrier-protein] dehydratase FabZ</fullName>
        <ecNumber evidence="1">4.2.1.59</ecNumber>
    </recommendedName>
    <alternativeName>
        <fullName evidence="1">(3R)-hydroxymyristoyl-[acyl-carrier-protein] dehydratase</fullName>
        <shortName evidence="1">(3R)-hydroxymyristoyl-ACP dehydrase</shortName>
    </alternativeName>
    <alternativeName>
        <fullName evidence="1">Beta-hydroxyacyl-ACP dehydratase</fullName>
    </alternativeName>
</protein>
<name>FABZ_GRABC</name>
<feature type="chain" id="PRO_0000340778" description="3-hydroxyacyl-[acyl-carrier-protein] dehydratase FabZ">
    <location>
        <begin position="1"/>
        <end position="170"/>
    </location>
</feature>
<feature type="active site" evidence="1">
    <location>
        <position position="66"/>
    </location>
</feature>
<keyword id="KW-0963">Cytoplasm</keyword>
<keyword id="KW-0441">Lipid A biosynthesis</keyword>
<keyword id="KW-0444">Lipid biosynthesis</keyword>
<keyword id="KW-0443">Lipid metabolism</keyword>
<keyword id="KW-0456">Lyase</keyword>
<keyword id="KW-1185">Reference proteome</keyword>
<proteinExistence type="inferred from homology"/>